<reference key="1">
    <citation type="journal article" date="2006" name="Nat. Biotechnol.">
        <title>Complete genome sequence of the entomopathogenic and metabolically versatile soil bacterium Pseudomonas entomophila.</title>
        <authorList>
            <person name="Vodovar N."/>
            <person name="Vallenet D."/>
            <person name="Cruveiller S."/>
            <person name="Rouy Z."/>
            <person name="Barbe V."/>
            <person name="Acosta C."/>
            <person name="Cattolico L."/>
            <person name="Jubin C."/>
            <person name="Lajus A."/>
            <person name="Segurens B."/>
            <person name="Vacherie B."/>
            <person name="Wincker P."/>
            <person name="Weissenbach J."/>
            <person name="Lemaitre B."/>
            <person name="Medigue C."/>
            <person name="Boccard F."/>
        </authorList>
    </citation>
    <scope>NUCLEOTIDE SEQUENCE [LARGE SCALE GENOMIC DNA]</scope>
    <source>
        <strain>L48</strain>
    </source>
</reference>
<name>HGD_PSEE4</name>
<keyword id="KW-0223">Dioxygenase</keyword>
<keyword id="KW-0408">Iron</keyword>
<keyword id="KW-0479">Metal-binding</keyword>
<keyword id="KW-0560">Oxidoreductase</keyword>
<keyword id="KW-0585">Phenylalanine catabolism</keyword>
<keyword id="KW-0828">Tyrosine catabolism</keyword>
<dbReference type="EC" id="1.13.11.5" evidence="1"/>
<dbReference type="EMBL" id="CT573326">
    <property type="protein sequence ID" value="CAK17286.1"/>
    <property type="molecule type" value="Genomic_DNA"/>
</dbReference>
<dbReference type="RefSeq" id="WP_011535651.1">
    <property type="nucleotide sequence ID" value="NC_008027.1"/>
</dbReference>
<dbReference type="SMR" id="Q1I500"/>
<dbReference type="STRING" id="384676.PSEEN4612"/>
<dbReference type="GeneID" id="32807590"/>
<dbReference type="KEGG" id="pen:PSEEN4612"/>
<dbReference type="eggNOG" id="COG3508">
    <property type="taxonomic scope" value="Bacteria"/>
</dbReference>
<dbReference type="HOGENOM" id="CLU_027174_0_0_6"/>
<dbReference type="OrthoDB" id="9811253at2"/>
<dbReference type="UniPathway" id="UPA00139">
    <property type="reaction ID" value="UER00339"/>
</dbReference>
<dbReference type="Proteomes" id="UP000000658">
    <property type="component" value="Chromosome"/>
</dbReference>
<dbReference type="GO" id="GO:0005737">
    <property type="term" value="C:cytoplasm"/>
    <property type="evidence" value="ECO:0007669"/>
    <property type="project" value="TreeGrafter"/>
</dbReference>
<dbReference type="GO" id="GO:0004411">
    <property type="term" value="F:homogentisate 1,2-dioxygenase activity"/>
    <property type="evidence" value="ECO:0007669"/>
    <property type="project" value="UniProtKB-UniRule"/>
</dbReference>
<dbReference type="GO" id="GO:0005506">
    <property type="term" value="F:iron ion binding"/>
    <property type="evidence" value="ECO:0007669"/>
    <property type="project" value="UniProtKB-UniRule"/>
</dbReference>
<dbReference type="GO" id="GO:0006559">
    <property type="term" value="P:L-phenylalanine catabolic process"/>
    <property type="evidence" value="ECO:0007669"/>
    <property type="project" value="UniProtKB-UniRule"/>
</dbReference>
<dbReference type="GO" id="GO:0006572">
    <property type="term" value="P:tyrosine catabolic process"/>
    <property type="evidence" value="ECO:0007669"/>
    <property type="project" value="UniProtKB-UniRule"/>
</dbReference>
<dbReference type="CDD" id="cd07000">
    <property type="entry name" value="cupin_HGO_N"/>
    <property type="match status" value="1"/>
</dbReference>
<dbReference type="FunFam" id="2.60.120.10:FF:000036">
    <property type="entry name" value="Homogentisate 1,2-dioxygenase"/>
    <property type="match status" value="1"/>
</dbReference>
<dbReference type="Gene3D" id="2.60.120.10">
    <property type="entry name" value="Jelly Rolls"/>
    <property type="match status" value="1"/>
</dbReference>
<dbReference type="HAMAP" id="MF_00334">
    <property type="entry name" value="Homogentis_dioxygen"/>
    <property type="match status" value="1"/>
</dbReference>
<dbReference type="InterPro" id="IPR046451">
    <property type="entry name" value="HgmA_C"/>
</dbReference>
<dbReference type="InterPro" id="IPR046452">
    <property type="entry name" value="HgmA_N"/>
</dbReference>
<dbReference type="InterPro" id="IPR005708">
    <property type="entry name" value="Homogentis_dOase"/>
</dbReference>
<dbReference type="InterPro" id="IPR022950">
    <property type="entry name" value="Homogentis_dOase_bac"/>
</dbReference>
<dbReference type="InterPro" id="IPR014710">
    <property type="entry name" value="RmlC-like_jellyroll"/>
</dbReference>
<dbReference type="InterPro" id="IPR011051">
    <property type="entry name" value="RmlC_Cupin_sf"/>
</dbReference>
<dbReference type="NCBIfam" id="TIGR01015">
    <property type="entry name" value="hmgA"/>
    <property type="match status" value="1"/>
</dbReference>
<dbReference type="PANTHER" id="PTHR11056">
    <property type="entry name" value="HOMOGENTISATE 1,2-DIOXYGENASE"/>
    <property type="match status" value="1"/>
</dbReference>
<dbReference type="PANTHER" id="PTHR11056:SF0">
    <property type="entry name" value="HOMOGENTISATE 1,2-DIOXYGENASE"/>
    <property type="match status" value="1"/>
</dbReference>
<dbReference type="Pfam" id="PF04209">
    <property type="entry name" value="HgmA_C"/>
    <property type="match status" value="1"/>
</dbReference>
<dbReference type="Pfam" id="PF20510">
    <property type="entry name" value="HgmA_N"/>
    <property type="match status" value="1"/>
</dbReference>
<dbReference type="SUPFAM" id="SSF51182">
    <property type="entry name" value="RmlC-like cupins"/>
    <property type="match status" value="1"/>
</dbReference>
<organism>
    <name type="scientific">Pseudomonas entomophila (strain L48)</name>
    <dbReference type="NCBI Taxonomy" id="384676"/>
    <lineage>
        <taxon>Bacteria</taxon>
        <taxon>Pseudomonadati</taxon>
        <taxon>Pseudomonadota</taxon>
        <taxon>Gammaproteobacteria</taxon>
        <taxon>Pseudomonadales</taxon>
        <taxon>Pseudomonadaceae</taxon>
        <taxon>Pseudomonas</taxon>
    </lineage>
</organism>
<feature type="chain" id="PRO_1000019534" description="Homogentisate 1,2-dioxygenase">
    <location>
        <begin position="1"/>
        <end position="433"/>
    </location>
</feature>
<feature type="active site" description="Proton acceptor" evidence="1">
    <location>
        <position position="288"/>
    </location>
</feature>
<feature type="binding site" evidence="1">
    <location>
        <position position="331"/>
    </location>
    <ligand>
        <name>Fe cation</name>
        <dbReference type="ChEBI" id="CHEBI:24875"/>
    </ligand>
</feature>
<feature type="binding site" evidence="1">
    <location>
        <position position="337"/>
    </location>
    <ligand>
        <name>Fe cation</name>
        <dbReference type="ChEBI" id="CHEBI:24875"/>
    </ligand>
</feature>
<feature type="binding site" evidence="1">
    <location>
        <position position="346"/>
    </location>
    <ligand>
        <name>homogentisate</name>
        <dbReference type="ChEBI" id="CHEBI:16169"/>
    </ligand>
</feature>
<feature type="binding site" evidence="1">
    <location>
        <position position="367"/>
    </location>
    <ligand>
        <name>Fe cation</name>
        <dbReference type="ChEBI" id="CHEBI:24875"/>
    </ligand>
</feature>
<feature type="binding site" evidence="1">
    <location>
        <position position="367"/>
    </location>
    <ligand>
        <name>homogentisate</name>
        <dbReference type="ChEBI" id="CHEBI:16169"/>
    </ligand>
</feature>
<gene>
    <name evidence="1" type="primary">hmgA</name>
    <name type="ordered locus">PSEEN4612</name>
</gene>
<comment type="function">
    <text evidence="1">Involved in the catabolism of homogentisate (2,5-dihydroxyphenylacetate or 2,5-OH-PhAc), a central intermediate in the degradation of phenylalanine and tyrosine. Catalyzes the oxidative ring cleavage of the aromatic ring of homogentisate to yield maleylacetoacetate.</text>
</comment>
<comment type="catalytic activity">
    <reaction evidence="1">
        <text>homogentisate + O2 = 4-maleylacetoacetate + H(+)</text>
        <dbReference type="Rhea" id="RHEA:15449"/>
        <dbReference type="ChEBI" id="CHEBI:15378"/>
        <dbReference type="ChEBI" id="CHEBI:15379"/>
        <dbReference type="ChEBI" id="CHEBI:16169"/>
        <dbReference type="ChEBI" id="CHEBI:17105"/>
        <dbReference type="EC" id="1.13.11.5"/>
    </reaction>
</comment>
<comment type="cofactor">
    <cofactor evidence="1">
        <name>Fe cation</name>
        <dbReference type="ChEBI" id="CHEBI:24875"/>
    </cofactor>
</comment>
<comment type="pathway">
    <text evidence="1">Amino-acid degradation; L-phenylalanine degradation; acetoacetate and fumarate from L-phenylalanine: step 4/6.</text>
</comment>
<comment type="subunit">
    <text evidence="1">Hexamer; dimer of trimers.</text>
</comment>
<comment type="similarity">
    <text evidence="1">Belongs to the homogentisate dioxygenase family.</text>
</comment>
<protein>
    <recommendedName>
        <fullName evidence="1">Homogentisate 1,2-dioxygenase</fullName>
        <shortName evidence="1">HGDO</shortName>
        <ecNumber evidence="1">1.13.11.5</ecNumber>
    </recommendedName>
    <alternativeName>
        <fullName evidence="1">Homogentisate oxygenase</fullName>
    </alternativeName>
    <alternativeName>
        <fullName evidence="1">Homogentisic acid oxidase</fullName>
    </alternativeName>
    <alternativeName>
        <fullName evidence="1">Homogentisicase</fullName>
    </alternativeName>
</protein>
<accession>Q1I500</accession>
<sequence length="433" mass="48300">MTRDTSPQLQYLSGFGNEFASEALPGALPVGQNSPQKAPYGLYAELLSGTAFTMTRSELRRTWLYRIRPSALHPRFERLERQPLTGALGAITPNRLRWSPQPMPAEPTDFIEGWLPMVANSASEKPAGVSIYIYRANRSMERVFFNADGELLLVPEQGRLRIATELGVLEVEPLEIAVIPRGMKFRVELLDDQARGYIAENHGAPLRIPDLGPIGSNGLANPRDFLTPVAHYEETSGPVQLVQKFLGEHWACELQHSPLDVVAWHGSNVPYKYDLRRFNTIGTVSFDHPDPSIFTVLTSPTSVHGMANMDFVIFPPRWMVAENTFRPPWFHRNLMNEFMGLIQGAYDAKAEGFLPGGASLHGVMSAHGPDAETCDKAISVDLAPHKIDNTMAFMFETSQVLRPSRQALESPQLQADYDSCWATLPSTFNPNRR</sequence>
<evidence type="ECO:0000255" key="1">
    <source>
        <dbReference type="HAMAP-Rule" id="MF_00334"/>
    </source>
</evidence>
<proteinExistence type="inferred from homology"/>